<comment type="function">
    <text evidence="1">Required for the proteolytic cleavage of the transcription factor pacC in response to alkaline ambient pH. May act as a scaffold protein that recruits the calpain-like protease palB via vps32 to its substrate pacC (By similarity).</text>
</comment>
<comment type="subunit">
    <text evidence="1">Interacts with pacC by binding to its two YPX[LI] motifs.</text>
</comment>
<comment type="similarity">
    <text evidence="4">Belongs to the palA/RIM20 family.</text>
</comment>
<comment type="sequence caution" evidence="4">
    <conflict type="erroneous gene model prediction">
        <sequence resource="EMBL-CDS" id="BAE59440"/>
    </conflict>
</comment>
<protein>
    <recommendedName>
        <fullName>pH-response regulator protein palA/RIM20</fullName>
    </recommendedName>
</protein>
<name>PALA_ASPOR</name>
<sequence length="828" mass="93333">MTSNILQIPFRRSHTVSLSDAITQYISTKYDQRPDMFADDLLIIDRLRNEAIHVQEPHVSGISRLVTYAAQLKWLGGKFPVDIGVEFPWYPAFGFNTSRPISQNNIRFELANILFNLVALYSQLAFSVNRTTPDGLKQACNYLCQAAGVLAHLRADILPDLRASPPEDMDDMTLQSLEQLLLAQGQECFWQKAVKDGLKDASIARLAAKVSDFYAEGGDYAVQSNAISPEWIHHMTAKHHHFAAAAQYRQSLDCLEKRKYGEEVARLRDSEVCVNEALKESRWINRTVLGDLQGLKNRVTEDLKRAEKDNDVIYLNPVPPKSELKIIDRACMVAAKAPSQVTDAISMLGDNGPLGQPLFSKLVPYAVHIAASIYSDRRDRLVNETIIGELETMTDKLRDLLSSLNLPGSLQALEKPLGLPPTLVSHAEEMRQQDGLNRLRRSLEDTARVKANDKAAYNEGVELLAAEKAEDDSSRRKYGTDRWAREPSEAAASKLYTTAREIDGYFSSAQSSDNLVEQKLRDSEAVFRVLTGTNRDLEMYVPSSRRAAIPPEVERESIRLRGCLSEVSRLENRRKRRAQALKDKARTDDISKLQGWEAARLEREFPMQAIQASQFEDLFEEQLHLYDTDLEMVTQEQHEQDQISAQVREANRAFTRAHTGDASTKEREKALQELENGYLKYKEIISNIEVGRKFYNDLAKIVGRFRDDCKAFVHQRRMEASQIEGDITSVAAMASLNLSQPHLRQYSQQPTQPAQPVQPAQPVQPPNQLPPQPQPVQHQPPRDEPLTAPQPTRANTRPSMAPGVWSPEMGIRFGAQGTWDPSKGVKFS</sequence>
<feature type="chain" id="PRO_0000218874" description="pH-response regulator protein palA/RIM20">
    <location>
        <begin position="1"/>
        <end position="828"/>
    </location>
</feature>
<feature type="domain" description="BRO1" evidence="2">
    <location>
        <begin position="4"/>
        <end position="397"/>
    </location>
</feature>
<feature type="region of interest" description="Disordered" evidence="3">
    <location>
        <begin position="743"/>
        <end position="828"/>
    </location>
</feature>
<feature type="compositionally biased region" description="Low complexity" evidence="3">
    <location>
        <begin position="748"/>
        <end position="761"/>
    </location>
</feature>
<feature type="compositionally biased region" description="Pro residues" evidence="3">
    <location>
        <begin position="762"/>
        <end position="774"/>
    </location>
</feature>
<feature type="compositionally biased region" description="Polar residues" evidence="3">
    <location>
        <begin position="789"/>
        <end position="798"/>
    </location>
</feature>
<feature type="sequence conflict" description="In Ref. 1; BAD83606." evidence="4" ref="1">
    <original>LQGW</original>
    <variation>ALLK</variation>
    <location>
        <begin position="593"/>
        <end position="596"/>
    </location>
</feature>
<gene>
    <name type="primary">palA</name>
    <name type="ORF">AO090023000950</name>
</gene>
<proteinExistence type="inferred from homology"/>
<evidence type="ECO:0000250" key="1"/>
<evidence type="ECO:0000255" key="2">
    <source>
        <dbReference type="PROSITE-ProRule" id="PRU00526"/>
    </source>
</evidence>
<evidence type="ECO:0000256" key="3">
    <source>
        <dbReference type="SAM" id="MobiDB-lite"/>
    </source>
</evidence>
<evidence type="ECO:0000305" key="4"/>
<dbReference type="EMBL" id="AB062767">
    <property type="protein sequence ID" value="BAD83606.1"/>
    <property type="molecule type" value="Genomic_DNA"/>
</dbReference>
<dbReference type="EMBL" id="BA000051">
    <property type="protein sequence ID" value="BAE59440.1"/>
    <property type="status" value="ALT_SEQ"/>
    <property type="molecule type" value="Genomic_DNA"/>
</dbReference>
<dbReference type="SMR" id="Q5KU05"/>
<dbReference type="STRING" id="510516.Q5KU05"/>
<dbReference type="EnsemblFungi" id="BAE59440">
    <property type="protein sequence ID" value="BAE59440"/>
    <property type="gene ID" value="AO090023000950"/>
</dbReference>
<dbReference type="Proteomes" id="UP000006564">
    <property type="component" value="Chromosome 3"/>
</dbReference>
<dbReference type="GO" id="GO:0005768">
    <property type="term" value="C:endosome"/>
    <property type="evidence" value="ECO:0007669"/>
    <property type="project" value="TreeGrafter"/>
</dbReference>
<dbReference type="CDD" id="cd09241">
    <property type="entry name" value="BRO1_ScRim20-like"/>
    <property type="match status" value="1"/>
</dbReference>
<dbReference type="CDD" id="cd09236">
    <property type="entry name" value="V_AnPalA_UmRIM20_like"/>
    <property type="match status" value="1"/>
</dbReference>
<dbReference type="Gene3D" id="1.20.120.560">
    <property type="entry name" value="alix/aip1 in complex with the ypdl late domain"/>
    <property type="match status" value="1"/>
</dbReference>
<dbReference type="Gene3D" id="1.20.140.50">
    <property type="entry name" value="alix/aip1 like domains"/>
    <property type="match status" value="1"/>
</dbReference>
<dbReference type="Gene3D" id="1.25.40.280">
    <property type="entry name" value="alix/aip1 like domains"/>
    <property type="match status" value="1"/>
</dbReference>
<dbReference type="InterPro" id="IPR025304">
    <property type="entry name" value="ALIX_V_dom"/>
</dbReference>
<dbReference type="InterPro" id="IPR004328">
    <property type="entry name" value="BRO1_dom"/>
</dbReference>
<dbReference type="InterPro" id="IPR038499">
    <property type="entry name" value="BRO1_sf"/>
</dbReference>
<dbReference type="PANTHER" id="PTHR23030">
    <property type="entry name" value="PCD6 INTERACTING PROTEIN-RELATED"/>
    <property type="match status" value="1"/>
</dbReference>
<dbReference type="PANTHER" id="PTHR23030:SF39">
    <property type="entry name" value="PROGRAMMED CELL DEATH 6-INTERACTING PROTEIN"/>
    <property type="match status" value="1"/>
</dbReference>
<dbReference type="Pfam" id="PF13949">
    <property type="entry name" value="ALIX_LYPXL_bnd"/>
    <property type="match status" value="1"/>
</dbReference>
<dbReference type="Pfam" id="PF03097">
    <property type="entry name" value="BRO1"/>
    <property type="match status" value="1"/>
</dbReference>
<dbReference type="SMART" id="SM01041">
    <property type="entry name" value="BRO1"/>
    <property type="match status" value="1"/>
</dbReference>
<dbReference type="PROSITE" id="PS51180">
    <property type="entry name" value="BRO1"/>
    <property type="match status" value="1"/>
</dbReference>
<organism>
    <name type="scientific">Aspergillus oryzae (strain ATCC 42149 / RIB 40)</name>
    <name type="common">Yellow koji mold</name>
    <dbReference type="NCBI Taxonomy" id="510516"/>
    <lineage>
        <taxon>Eukaryota</taxon>
        <taxon>Fungi</taxon>
        <taxon>Dikarya</taxon>
        <taxon>Ascomycota</taxon>
        <taxon>Pezizomycotina</taxon>
        <taxon>Eurotiomycetes</taxon>
        <taxon>Eurotiomycetidae</taxon>
        <taxon>Eurotiales</taxon>
        <taxon>Aspergillaceae</taxon>
        <taxon>Aspergillus</taxon>
        <taxon>Aspergillus subgen. Circumdati</taxon>
    </lineage>
</organism>
<accession>Q5KU05</accession>
<accession>Q2UG75</accession>
<reference key="1">
    <citation type="submission" date="2001-06" db="EMBL/GenBank/DDBJ databases">
        <title>Aspergillus oryzae palA.</title>
        <authorList>
            <person name="Sano M."/>
            <person name="Takase K."/>
            <person name="Yamamoto M."/>
            <person name="Machida M."/>
        </authorList>
    </citation>
    <scope>NUCLEOTIDE SEQUENCE [GENOMIC DNA]</scope>
</reference>
<reference key="2">
    <citation type="journal article" date="2005" name="Nature">
        <title>Genome sequencing and analysis of Aspergillus oryzae.</title>
        <authorList>
            <person name="Machida M."/>
            <person name="Asai K."/>
            <person name="Sano M."/>
            <person name="Tanaka T."/>
            <person name="Kumagai T."/>
            <person name="Terai G."/>
            <person name="Kusumoto K."/>
            <person name="Arima T."/>
            <person name="Akita O."/>
            <person name="Kashiwagi Y."/>
            <person name="Abe K."/>
            <person name="Gomi K."/>
            <person name="Horiuchi H."/>
            <person name="Kitamoto K."/>
            <person name="Kobayashi T."/>
            <person name="Takeuchi M."/>
            <person name="Denning D.W."/>
            <person name="Galagan J.E."/>
            <person name="Nierman W.C."/>
            <person name="Yu J."/>
            <person name="Archer D.B."/>
            <person name="Bennett J.W."/>
            <person name="Bhatnagar D."/>
            <person name="Cleveland T.E."/>
            <person name="Fedorova N.D."/>
            <person name="Gotoh O."/>
            <person name="Horikawa H."/>
            <person name="Hosoyama A."/>
            <person name="Ichinomiya M."/>
            <person name="Igarashi R."/>
            <person name="Iwashita K."/>
            <person name="Juvvadi P.R."/>
            <person name="Kato M."/>
            <person name="Kato Y."/>
            <person name="Kin T."/>
            <person name="Kokubun A."/>
            <person name="Maeda H."/>
            <person name="Maeyama N."/>
            <person name="Maruyama J."/>
            <person name="Nagasaki H."/>
            <person name="Nakajima T."/>
            <person name="Oda K."/>
            <person name="Okada K."/>
            <person name="Paulsen I."/>
            <person name="Sakamoto K."/>
            <person name="Sawano T."/>
            <person name="Takahashi M."/>
            <person name="Takase K."/>
            <person name="Terabayashi Y."/>
            <person name="Wortman J.R."/>
            <person name="Yamada O."/>
            <person name="Yamagata Y."/>
            <person name="Anazawa H."/>
            <person name="Hata Y."/>
            <person name="Koide Y."/>
            <person name="Komori T."/>
            <person name="Koyama Y."/>
            <person name="Minetoki T."/>
            <person name="Suharnan S."/>
            <person name="Tanaka A."/>
            <person name="Isono K."/>
            <person name="Kuhara S."/>
            <person name="Ogasawara N."/>
            <person name="Kikuchi H."/>
        </authorList>
    </citation>
    <scope>NUCLEOTIDE SEQUENCE [LARGE SCALE GENOMIC DNA]</scope>
    <source>
        <strain>ATCC 42149 / RIB 40</strain>
    </source>
</reference>
<keyword id="KW-0175">Coiled coil</keyword>
<keyword id="KW-1185">Reference proteome</keyword>